<keyword id="KW-0066">ATP synthesis</keyword>
<keyword id="KW-0997">Cell inner membrane</keyword>
<keyword id="KW-1003">Cell membrane</keyword>
<keyword id="KW-0138">CF(0)</keyword>
<keyword id="KW-0375">Hydrogen ion transport</keyword>
<keyword id="KW-0406">Ion transport</keyword>
<keyword id="KW-0472">Membrane</keyword>
<keyword id="KW-0812">Transmembrane</keyword>
<keyword id="KW-1133">Transmembrane helix</keyword>
<keyword id="KW-0813">Transport</keyword>
<reference key="1">
    <citation type="journal article" date="1999" name="Nature">
        <title>Genomic sequence comparison of two unrelated isolates of the human gastric pathogen Helicobacter pylori.</title>
        <authorList>
            <person name="Alm R.A."/>
            <person name="Ling L.-S.L."/>
            <person name="Moir D.T."/>
            <person name="King B.L."/>
            <person name="Brown E.D."/>
            <person name="Doig P.C."/>
            <person name="Smith D.R."/>
            <person name="Noonan B."/>
            <person name="Guild B.C."/>
            <person name="deJonge B.L."/>
            <person name="Carmel G."/>
            <person name="Tummino P.J."/>
            <person name="Caruso A."/>
            <person name="Uria-Nickelsen M."/>
            <person name="Mills D.M."/>
            <person name="Ives C."/>
            <person name="Gibson R."/>
            <person name="Merberg D."/>
            <person name="Mills S.D."/>
            <person name="Jiang Q."/>
            <person name="Taylor D.E."/>
            <person name="Vovis G.F."/>
            <person name="Trust T.J."/>
        </authorList>
    </citation>
    <scope>NUCLEOTIDE SEQUENCE [LARGE SCALE GENOMIC DNA]</scope>
    <source>
        <strain>J99 / ATCC 700824</strain>
    </source>
</reference>
<feature type="chain" id="PRO_0000082058" description="ATP synthase subunit a">
    <location>
        <begin position="1"/>
        <end position="226"/>
    </location>
</feature>
<feature type="transmembrane region" description="Helical" evidence="1">
    <location>
        <begin position="18"/>
        <end position="38"/>
    </location>
</feature>
<feature type="transmembrane region" description="Helical" evidence="1">
    <location>
        <begin position="79"/>
        <end position="99"/>
    </location>
</feature>
<feature type="transmembrane region" description="Helical" evidence="1">
    <location>
        <begin position="105"/>
        <end position="125"/>
    </location>
</feature>
<feature type="transmembrane region" description="Helical" evidence="1">
    <location>
        <begin position="134"/>
        <end position="154"/>
    </location>
</feature>
<feature type="transmembrane region" description="Helical" evidence="1">
    <location>
        <begin position="179"/>
        <end position="199"/>
    </location>
</feature>
<feature type="transmembrane region" description="Helical" evidence="1">
    <location>
        <begin position="201"/>
        <end position="221"/>
    </location>
</feature>
<name>ATP6_HELPJ</name>
<gene>
    <name evidence="1" type="primary">atpB</name>
    <name type="ordered locus">jhp_0767</name>
</gene>
<dbReference type="EMBL" id="AE001439">
    <property type="protein sequence ID" value="AAD06346.1"/>
    <property type="molecule type" value="Genomic_DNA"/>
</dbReference>
<dbReference type="PIR" id="G71890">
    <property type="entry name" value="G71890"/>
</dbReference>
<dbReference type="RefSeq" id="WP_000401209.1">
    <property type="nucleotide sequence ID" value="NZ_CP011330.1"/>
</dbReference>
<dbReference type="SMR" id="Q9ZL15"/>
<dbReference type="KEGG" id="hpj:jhp_0767"/>
<dbReference type="PATRIC" id="fig|85963.30.peg.208"/>
<dbReference type="eggNOG" id="COG0356">
    <property type="taxonomic scope" value="Bacteria"/>
</dbReference>
<dbReference type="Proteomes" id="UP000000804">
    <property type="component" value="Chromosome"/>
</dbReference>
<dbReference type="GO" id="GO:0005886">
    <property type="term" value="C:plasma membrane"/>
    <property type="evidence" value="ECO:0007669"/>
    <property type="project" value="UniProtKB-SubCell"/>
</dbReference>
<dbReference type="GO" id="GO:0045259">
    <property type="term" value="C:proton-transporting ATP synthase complex"/>
    <property type="evidence" value="ECO:0007669"/>
    <property type="project" value="UniProtKB-KW"/>
</dbReference>
<dbReference type="GO" id="GO:0046933">
    <property type="term" value="F:proton-transporting ATP synthase activity, rotational mechanism"/>
    <property type="evidence" value="ECO:0007669"/>
    <property type="project" value="UniProtKB-UniRule"/>
</dbReference>
<dbReference type="GO" id="GO:0042777">
    <property type="term" value="P:proton motive force-driven plasma membrane ATP synthesis"/>
    <property type="evidence" value="ECO:0007669"/>
    <property type="project" value="TreeGrafter"/>
</dbReference>
<dbReference type="CDD" id="cd00310">
    <property type="entry name" value="ATP-synt_Fo_a_6"/>
    <property type="match status" value="1"/>
</dbReference>
<dbReference type="FunFam" id="1.20.120.220:FF:000006">
    <property type="entry name" value="ATP synthase subunit a"/>
    <property type="match status" value="1"/>
</dbReference>
<dbReference type="Gene3D" id="1.20.120.220">
    <property type="entry name" value="ATP synthase, F0 complex, subunit A"/>
    <property type="match status" value="1"/>
</dbReference>
<dbReference type="HAMAP" id="MF_01393">
    <property type="entry name" value="ATP_synth_a_bact"/>
    <property type="match status" value="1"/>
</dbReference>
<dbReference type="InterPro" id="IPR045082">
    <property type="entry name" value="ATP_syn_F0_a_bact/chloroplast"/>
</dbReference>
<dbReference type="InterPro" id="IPR000568">
    <property type="entry name" value="ATP_synth_F0_asu"/>
</dbReference>
<dbReference type="InterPro" id="IPR023011">
    <property type="entry name" value="ATP_synth_F0_asu_AS"/>
</dbReference>
<dbReference type="InterPro" id="IPR035908">
    <property type="entry name" value="F0_ATP_A_sf"/>
</dbReference>
<dbReference type="NCBIfam" id="TIGR01131">
    <property type="entry name" value="ATP_synt_6_or_A"/>
    <property type="match status" value="1"/>
</dbReference>
<dbReference type="NCBIfam" id="NF004481">
    <property type="entry name" value="PRK05815.2-3"/>
    <property type="match status" value="1"/>
</dbReference>
<dbReference type="PANTHER" id="PTHR42823">
    <property type="entry name" value="ATP SYNTHASE SUBUNIT A, CHLOROPLASTIC"/>
    <property type="match status" value="1"/>
</dbReference>
<dbReference type="PANTHER" id="PTHR42823:SF3">
    <property type="entry name" value="ATP SYNTHASE SUBUNIT A, CHLOROPLASTIC"/>
    <property type="match status" value="1"/>
</dbReference>
<dbReference type="Pfam" id="PF00119">
    <property type="entry name" value="ATP-synt_A"/>
    <property type="match status" value="1"/>
</dbReference>
<dbReference type="PRINTS" id="PR00123">
    <property type="entry name" value="ATPASEA"/>
</dbReference>
<dbReference type="SUPFAM" id="SSF81336">
    <property type="entry name" value="F1F0 ATP synthase subunit A"/>
    <property type="match status" value="1"/>
</dbReference>
<dbReference type="PROSITE" id="PS00449">
    <property type="entry name" value="ATPASE_A"/>
    <property type="match status" value="1"/>
</dbReference>
<comment type="function">
    <text evidence="1">Key component of the proton channel; it plays a direct role in the translocation of protons across the membrane.</text>
</comment>
<comment type="subunit">
    <text evidence="1">F-type ATPases have 2 components, CF(1) - the catalytic core - and CF(0) - the membrane proton channel. CF(1) has five subunits: alpha(3), beta(3), gamma(1), delta(1), epsilon(1). CF(0) has three main subunits: a(1), b(2) and c(9-12). The alpha and beta chains form an alternating ring which encloses part of the gamma chain. CF(1) is attached to CF(0) by a central stalk formed by the gamma and epsilon chains, while a peripheral stalk is formed by the delta and b chains.</text>
</comment>
<comment type="subcellular location">
    <subcellularLocation>
        <location evidence="1">Cell inner membrane</location>
        <topology evidence="1">Multi-pass membrane protein</topology>
    </subcellularLocation>
</comment>
<comment type="similarity">
    <text evidence="1">Belongs to the ATPase A chain family.</text>
</comment>
<protein>
    <recommendedName>
        <fullName evidence="1">ATP synthase subunit a</fullName>
    </recommendedName>
    <alternativeName>
        <fullName evidence="1">ATP synthase F0 sector subunit a</fullName>
    </alternativeName>
    <alternativeName>
        <fullName evidence="1">F-ATPase subunit 6</fullName>
    </alternativeName>
</protein>
<evidence type="ECO:0000255" key="1">
    <source>
        <dbReference type="HAMAP-Rule" id="MF_01393"/>
    </source>
</evidence>
<sequence>MEHRVFTIANFFSSNHDFITGFFVVLTAVLMFFISLGASRKMQMVPMGLQNVYESIISAILSVAKDIIGEELARKYFPLAGTIALYVFFSNMIGIIPGFESPTASWSFTLVLALIVFFYYHFEGIRVQGFFKYFAHFAGPVKWLAPFMFPIEIISHFSRIVSLSFRLFGNIKGDDMFLLIMLLLVPWAVPVAPFMVLFFMGILQAFVFMILTYVYLAGAVLTDEGH</sequence>
<accession>Q9ZL15</accession>
<proteinExistence type="inferred from homology"/>
<organism>
    <name type="scientific">Helicobacter pylori (strain J99 / ATCC 700824)</name>
    <name type="common">Campylobacter pylori J99</name>
    <dbReference type="NCBI Taxonomy" id="85963"/>
    <lineage>
        <taxon>Bacteria</taxon>
        <taxon>Pseudomonadati</taxon>
        <taxon>Campylobacterota</taxon>
        <taxon>Epsilonproteobacteria</taxon>
        <taxon>Campylobacterales</taxon>
        <taxon>Helicobacteraceae</taxon>
        <taxon>Helicobacter</taxon>
    </lineage>
</organism>